<sequence>MKFFAVLALCIVGAIASPLTADEASLVQSSWKAVSHNEVEILAAVFAAYPDIQNKFSQFAGKDLASIKDTGAFATHATRIVSFLSEVIALSGNDSNAAAVNSLVSKLGDDHKARGVSAAQFGEFRTALVAYLQANVSWGDNVAAAWNKALDNTFAIVVPRL</sequence>
<comment type="subunit">
    <text>Homodimer.</text>
</comment>
<comment type="miscellaneous">
    <text>There are at least 12 different components in Midge globin.</text>
</comment>
<comment type="miscellaneous">
    <text>There are at least nine genes for VIIB variants.</text>
</comment>
<comment type="similarity">
    <text evidence="1">Belongs to the globin family.</text>
</comment>
<gene>
    <name type="primary">CTT-7B6</name>
</gene>
<organism>
    <name type="scientific">Chironomus thummi thummi</name>
    <name type="common">Midge</name>
    <dbReference type="NCBI Taxonomy" id="7155"/>
    <lineage>
        <taxon>Eukaryota</taxon>
        <taxon>Metazoa</taxon>
        <taxon>Ecdysozoa</taxon>
        <taxon>Arthropoda</taxon>
        <taxon>Hexapoda</taxon>
        <taxon>Insecta</taxon>
        <taxon>Pterygota</taxon>
        <taxon>Neoptera</taxon>
        <taxon>Endopterygota</taxon>
        <taxon>Diptera</taxon>
        <taxon>Nematocera</taxon>
        <taxon>Chironomoidea</taxon>
        <taxon>Chironomidae</taxon>
        <taxon>Chironominae</taxon>
        <taxon>Chironomus</taxon>
    </lineage>
</organism>
<reference key="1">
    <citation type="journal article" date="1988" name="Gene">
        <title>Multiple clustered genes of the haemoglobin VIIB subfamily of Chironomus thummi thummi (Diptera).</title>
        <authorList>
            <person name="Trewitt P.M."/>
            <person name="Saffarini D.A."/>
            <person name="Bergtrom G."/>
        </authorList>
    </citation>
    <scope>NUCLEOTIDE SEQUENCE [GENOMIC DNA]</scope>
    <source>
        <tissue>Larva</tissue>
    </source>
</reference>
<reference key="2">
    <citation type="journal article" date="1995" name="J. Mol. Evol.">
        <title>Molecular evolutionary analysis of the YWVZ/7B globin gene cluster of the insect Chironomus thummi.</title>
        <authorList>
            <person name="Trewitt P.M."/>
            <person name="Luhm R.A."/>
            <person name="Samad F."/>
            <person name="Ramakrishnan S."/>
            <person name="Kao W.-Y."/>
            <person name="Bergtrom G."/>
        </authorList>
    </citation>
    <scope>NUCLEOTIDE SEQUENCE [GENOMIC DNA]</scope>
    <source>
        <tissue>Larva</tissue>
    </source>
</reference>
<reference key="3">
    <citation type="journal article" date="1979" name="Hoppe-Seyler's Z. Physiol. Chem.">
        <title>Hemoglobins, XXVI. Analysis of the primary structure of the dimeric insect haemoglobin CTT VIIB (Erythrocruorin) from Chironomus thummi thummi, Diptera.</title>
        <authorList>
            <person name="Sladic-Simic D."/>
            <person name="Kleinschmidt T."/>
            <person name="Braunitzer G."/>
        </authorList>
    </citation>
    <scope>PROTEIN SEQUENCE OF 17-161 (MIXTURE OF ISOZYMES)</scope>
</reference>
<name>GLB76_CHITH</name>
<feature type="signal peptide" evidence="2">
    <location>
        <begin position="1"/>
        <end position="16"/>
    </location>
</feature>
<feature type="chain" id="PRO_0000011199" description="Globin CTT-VIIB-6">
    <location>
        <begin position="17"/>
        <end position="161"/>
    </location>
</feature>
<feature type="domain" description="Globin" evidence="1">
    <location>
        <begin position="18"/>
        <end position="161"/>
    </location>
</feature>
<feature type="binding site" description="distal binding residue" evidence="1">
    <location>
        <position position="76"/>
    </location>
    <ligand>
        <name>heme b</name>
        <dbReference type="ChEBI" id="CHEBI:60344"/>
    </ligand>
    <ligandPart>
        <name>Fe</name>
        <dbReference type="ChEBI" id="CHEBI:18248"/>
    </ligandPart>
</feature>
<feature type="binding site" description="proximal binding residue" evidence="1">
    <location>
        <position position="111"/>
    </location>
    <ligand>
        <name>heme b</name>
        <dbReference type="ChEBI" id="CHEBI:60344"/>
    </ligand>
    <ligandPart>
        <name>Fe</name>
        <dbReference type="ChEBI" id="CHEBI:18248"/>
    </ligandPart>
</feature>
<dbReference type="EMBL" id="U07703">
    <property type="protein sequence ID" value="AAA85486.1"/>
    <property type="molecule type" value="Genomic_DNA"/>
</dbReference>
<dbReference type="PIR" id="A02547">
    <property type="entry name" value="GGICE8"/>
</dbReference>
<dbReference type="PIR" id="A30477">
    <property type="entry name" value="A30477"/>
</dbReference>
<dbReference type="SMR" id="P12549"/>
<dbReference type="Allergome" id="207">
    <property type="allergen name" value="Chi t 3"/>
</dbReference>
<dbReference type="Allergome" id="209">
    <property type="allergen name" value="Chi t 3.0702"/>
</dbReference>
<dbReference type="GO" id="GO:0005576">
    <property type="term" value="C:extracellular region"/>
    <property type="evidence" value="ECO:0007669"/>
    <property type="project" value="InterPro"/>
</dbReference>
<dbReference type="GO" id="GO:0005833">
    <property type="term" value="C:hemoglobin complex"/>
    <property type="evidence" value="ECO:0007669"/>
    <property type="project" value="InterPro"/>
</dbReference>
<dbReference type="GO" id="GO:0020037">
    <property type="term" value="F:heme binding"/>
    <property type="evidence" value="ECO:0007669"/>
    <property type="project" value="InterPro"/>
</dbReference>
<dbReference type="GO" id="GO:0046872">
    <property type="term" value="F:metal ion binding"/>
    <property type="evidence" value="ECO:0007669"/>
    <property type="project" value="UniProtKB-KW"/>
</dbReference>
<dbReference type="GO" id="GO:0019825">
    <property type="term" value="F:oxygen binding"/>
    <property type="evidence" value="ECO:0007669"/>
    <property type="project" value="InterPro"/>
</dbReference>
<dbReference type="GO" id="GO:0005344">
    <property type="term" value="F:oxygen carrier activity"/>
    <property type="evidence" value="ECO:0007669"/>
    <property type="project" value="UniProtKB-KW"/>
</dbReference>
<dbReference type="CDD" id="cd01040">
    <property type="entry name" value="Mb-like"/>
    <property type="match status" value="1"/>
</dbReference>
<dbReference type="Gene3D" id="1.10.490.10">
    <property type="entry name" value="Globins"/>
    <property type="match status" value="1"/>
</dbReference>
<dbReference type="InterPro" id="IPR002336">
    <property type="entry name" value="Erythrocruorin"/>
</dbReference>
<dbReference type="InterPro" id="IPR000971">
    <property type="entry name" value="Globin"/>
</dbReference>
<dbReference type="InterPro" id="IPR009050">
    <property type="entry name" value="Globin-like_sf"/>
</dbReference>
<dbReference type="InterPro" id="IPR012292">
    <property type="entry name" value="Globin/Proto"/>
</dbReference>
<dbReference type="InterPro" id="IPR044399">
    <property type="entry name" value="Mb-like_M"/>
</dbReference>
<dbReference type="PANTHER" id="PTHR47217">
    <property type="entry name" value="GLOBIN-LIKE PROTEIN"/>
    <property type="match status" value="1"/>
</dbReference>
<dbReference type="PANTHER" id="PTHR47217:SF1">
    <property type="entry name" value="GLOBIN-LIKE PROTEIN"/>
    <property type="match status" value="1"/>
</dbReference>
<dbReference type="Pfam" id="PF00042">
    <property type="entry name" value="Globin"/>
    <property type="match status" value="1"/>
</dbReference>
<dbReference type="PRINTS" id="PR00611">
    <property type="entry name" value="ERYTHCRUORIN"/>
</dbReference>
<dbReference type="SUPFAM" id="SSF46458">
    <property type="entry name" value="Globin-like"/>
    <property type="match status" value="1"/>
</dbReference>
<dbReference type="PROSITE" id="PS01033">
    <property type="entry name" value="GLOBIN"/>
    <property type="match status" value="1"/>
</dbReference>
<accession>P12549</accession>
<accession>P02225</accession>
<keyword id="KW-0903">Direct protein sequencing</keyword>
<keyword id="KW-0349">Heme</keyword>
<keyword id="KW-0408">Iron</keyword>
<keyword id="KW-0479">Metal-binding</keyword>
<keyword id="KW-0561">Oxygen transport</keyword>
<keyword id="KW-0732">Signal</keyword>
<keyword id="KW-0813">Transport</keyword>
<protein>
    <recommendedName>
        <fullName>Globin CTT-VIIB-6</fullName>
    </recommendedName>
</protein>
<proteinExistence type="evidence at protein level"/>
<evidence type="ECO:0000255" key="1">
    <source>
        <dbReference type="PROSITE-ProRule" id="PRU00238"/>
    </source>
</evidence>
<evidence type="ECO:0000269" key="2">
    <source>
    </source>
</evidence>